<reference key="1">
    <citation type="submission" date="2006-08" db="EMBL/GenBank/DDBJ databases">
        <title>Complete sequence of chromosome 1 of Burkholderia cepacia AMMD.</title>
        <authorList>
            <person name="Copeland A."/>
            <person name="Lucas S."/>
            <person name="Lapidus A."/>
            <person name="Barry K."/>
            <person name="Detter J.C."/>
            <person name="Glavina del Rio T."/>
            <person name="Hammon N."/>
            <person name="Israni S."/>
            <person name="Pitluck S."/>
            <person name="Bruce D."/>
            <person name="Chain P."/>
            <person name="Malfatti S."/>
            <person name="Shin M."/>
            <person name="Vergez L."/>
            <person name="Schmutz J."/>
            <person name="Larimer F."/>
            <person name="Land M."/>
            <person name="Hauser L."/>
            <person name="Kyrpides N."/>
            <person name="Kim E."/>
            <person name="Parke J."/>
            <person name="Coenye T."/>
            <person name="Konstantinidis K."/>
            <person name="Ramette A."/>
            <person name="Tiedje J."/>
            <person name="Richardson P."/>
        </authorList>
    </citation>
    <scope>NUCLEOTIDE SEQUENCE [LARGE SCALE GENOMIC DNA]</scope>
    <source>
        <strain>ATCC BAA-244 / DSM 16087 / CCUG 44356 / LMG 19182 / AMMD</strain>
    </source>
</reference>
<dbReference type="EC" id="7.6.2.14" evidence="1"/>
<dbReference type="EMBL" id="CP000440">
    <property type="protein sequence ID" value="ABI87023.1"/>
    <property type="molecule type" value="Genomic_DNA"/>
</dbReference>
<dbReference type="RefSeq" id="WP_011656763.1">
    <property type="nucleotide sequence ID" value="NC_008390.1"/>
</dbReference>
<dbReference type="SMR" id="Q0BFQ0"/>
<dbReference type="GeneID" id="93083133"/>
<dbReference type="KEGG" id="bam:Bamb_1465"/>
<dbReference type="PATRIC" id="fig|339670.21.peg.72"/>
<dbReference type="eggNOG" id="COG1116">
    <property type="taxonomic scope" value="Bacteria"/>
</dbReference>
<dbReference type="Proteomes" id="UP000000662">
    <property type="component" value="Chromosome 1"/>
</dbReference>
<dbReference type="GO" id="GO:0005886">
    <property type="term" value="C:plasma membrane"/>
    <property type="evidence" value="ECO:0007669"/>
    <property type="project" value="UniProtKB-SubCell"/>
</dbReference>
<dbReference type="GO" id="GO:0005524">
    <property type="term" value="F:ATP binding"/>
    <property type="evidence" value="ECO:0007669"/>
    <property type="project" value="UniProtKB-KW"/>
</dbReference>
<dbReference type="GO" id="GO:0016887">
    <property type="term" value="F:ATP hydrolysis activity"/>
    <property type="evidence" value="ECO:0007669"/>
    <property type="project" value="InterPro"/>
</dbReference>
<dbReference type="CDD" id="cd03293">
    <property type="entry name" value="ABC_NrtD_SsuB_transporters"/>
    <property type="match status" value="1"/>
</dbReference>
<dbReference type="Gene3D" id="3.40.50.300">
    <property type="entry name" value="P-loop containing nucleotide triphosphate hydrolases"/>
    <property type="match status" value="1"/>
</dbReference>
<dbReference type="InterPro" id="IPR003593">
    <property type="entry name" value="AAA+_ATPase"/>
</dbReference>
<dbReference type="InterPro" id="IPR003439">
    <property type="entry name" value="ABC_transporter-like_ATP-bd"/>
</dbReference>
<dbReference type="InterPro" id="IPR017871">
    <property type="entry name" value="ABC_transporter-like_CS"/>
</dbReference>
<dbReference type="InterPro" id="IPR050166">
    <property type="entry name" value="ABC_transporter_ATP-bind"/>
</dbReference>
<dbReference type="InterPro" id="IPR027417">
    <property type="entry name" value="P-loop_NTPase"/>
</dbReference>
<dbReference type="PANTHER" id="PTHR42788:SF17">
    <property type="entry name" value="ALIPHATIC SULFONATES IMPORT ATP-BINDING PROTEIN SSUB"/>
    <property type="match status" value="1"/>
</dbReference>
<dbReference type="PANTHER" id="PTHR42788">
    <property type="entry name" value="TAURINE IMPORT ATP-BINDING PROTEIN-RELATED"/>
    <property type="match status" value="1"/>
</dbReference>
<dbReference type="Pfam" id="PF00005">
    <property type="entry name" value="ABC_tran"/>
    <property type="match status" value="1"/>
</dbReference>
<dbReference type="SMART" id="SM00382">
    <property type="entry name" value="AAA"/>
    <property type="match status" value="1"/>
</dbReference>
<dbReference type="SUPFAM" id="SSF52540">
    <property type="entry name" value="P-loop containing nucleoside triphosphate hydrolases"/>
    <property type="match status" value="1"/>
</dbReference>
<dbReference type="PROSITE" id="PS00211">
    <property type="entry name" value="ABC_TRANSPORTER_1"/>
    <property type="match status" value="1"/>
</dbReference>
<dbReference type="PROSITE" id="PS50893">
    <property type="entry name" value="ABC_TRANSPORTER_2"/>
    <property type="match status" value="1"/>
</dbReference>
<dbReference type="PROSITE" id="PS51291">
    <property type="entry name" value="SSUB"/>
    <property type="match status" value="1"/>
</dbReference>
<name>SSUB_BURCM</name>
<proteinExistence type="inferred from homology"/>
<evidence type="ECO:0000255" key="1">
    <source>
        <dbReference type="HAMAP-Rule" id="MF_01724"/>
    </source>
</evidence>
<protein>
    <recommendedName>
        <fullName evidence="1">Aliphatic sulfonates import ATP-binding protein SsuB</fullName>
        <ecNumber evidence="1">7.6.2.14</ecNumber>
    </recommendedName>
</protein>
<organism>
    <name type="scientific">Burkholderia ambifaria (strain ATCC BAA-244 / DSM 16087 / CCUG 44356 / LMG 19182 / AMMD)</name>
    <name type="common">Burkholderia cepacia (strain AMMD)</name>
    <dbReference type="NCBI Taxonomy" id="339670"/>
    <lineage>
        <taxon>Bacteria</taxon>
        <taxon>Pseudomonadati</taxon>
        <taxon>Pseudomonadota</taxon>
        <taxon>Betaproteobacteria</taxon>
        <taxon>Burkholderiales</taxon>
        <taxon>Burkholderiaceae</taxon>
        <taxon>Burkholderia</taxon>
        <taxon>Burkholderia cepacia complex</taxon>
    </lineage>
</organism>
<comment type="function">
    <text evidence="1">Part of the ABC transporter complex SsuABC involved in aliphatic sulfonates import. Responsible for energy coupling to the transport system.</text>
</comment>
<comment type="catalytic activity">
    <reaction evidence="1">
        <text>ATP + H2O + aliphatic sulfonate-[sulfonate-binding protein]Side 1 = ADP + phosphate + aliphatic sulfonateSide 2 + [sulfonate-binding protein]Side 1.</text>
        <dbReference type="EC" id="7.6.2.14"/>
    </reaction>
</comment>
<comment type="subunit">
    <text evidence="1">The complex is composed of two ATP-binding proteins (SsuB), two transmembrane proteins (SsuC) and a solute-binding protein (SsuA).</text>
</comment>
<comment type="subcellular location">
    <subcellularLocation>
        <location evidence="1">Cell inner membrane</location>
        <topology evidence="1">Peripheral membrane protein</topology>
    </subcellularLocation>
</comment>
<comment type="similarity">
    <text evidence="1">Belongs to the ABC transporter superfamily. Aliphatic sulfonates importer (TC 3.A.1.17.2) family.</text>
</comment>
<feature type="chain" id="PRO_0000279899" description="Aliphatic sulfonates import ATP-binding protein SsuB">
    <location>
        <begin position="1"/>
        <end position="319"/>
    </location>
</feature>
<feature type="domain" description="ABC transporter" evidence="1">
    <location>
        <begin position="63"/>
        <end position="282"/>
    </location>
</feature>
<feature type="binding site" evidence="1">
    <location>
        <begin position="95"/>
        <end position="102"/>
    </location>
    <ligand>
        <name>ATP</name>
        <dbReference type="ChEBI" id="CHEBI:30616"/>
    </ligand>
</feature>
<gene>
    <name evidence="1" type="primary">ssuB</name>
    <name type="ordered locus">Bamb_1465</name>
</gene>
<accession>Q0BFQ0</accession>
<keyword id="KW-0067">ATP-binding</keyword>
<keyword id="KW-0997">Cell inner membrane</keyword>
<keyword id="KW-1003">Cell membrane</keyword>
<keyword id="KW-0472">Membrane</keyword>
<keyword id="KW-0547">Nucleotide-binding</keyword>
<keyword id="KW-1278">Translocase</keyword>
<keyword id="KW-0813">Transport</keyword>
<sequence>MNATTSAAAYGPLAGADLEAELAQARVTDDAVRDAAIVDRDGGASVVPLARRRPGSPAPGDAVTLSGVSKRFGTRTVLDNVELGIARGSFVAIVGRSGCGKSTLLRLVAGLETPSSGALATRGEGGGTLDTRIMYQDARLLPWKTVLQNVMLGLGRGARDRARAVLDEVGLLERANDWPAQLSGGQRQRVALARALVHRPQLLLLDEPLGALDALTRIEMHALIERLWREHRFTALLVTHDVQEAVALGDRILLIEQGRVALDQQVPLDRPRARASAAFAALEDRVLQRVLAGGPGGADQEAAREVDHVRPVGQIRWAV</sequence>